<evidence type="ECO:0000255" key="1">
    <source>
        <dbReference type="HAMAP-Rule" id="MF_00405"/>
    </source>
</evidence>
<comment type="function">
    <text evidence="1">Necessary for the introduction of cis unsaturation into fatty acids. Catalyzes the dehydration of (3R)-3-hydroxydecanoyl-ACP to E-(2)-decenoyl-ACP and then its isomerization to Z-(3)-decenoyl-ACP. Can catalyze the dehydratase reaction for beta-hydroxyacyl-ACPs with saturated chain lengths up to 16:0, being most active on intermediate chain length.</text>
</comment>
<comment type="catalytic activity">
    <reaction evidence="1">
        <text>a (3R)-hydroxyacyl-[ACP] = a (2E)-enoyl-[ACP] + H2O</text>
        <dbReference type="Rhea" id="RHEA:13097"/>
        <dbReference type="Rhea" id="RHEA-COMP:9925"/>
        <dbReference type="Rhea" id="RHEA-COMP:9945"/>
        <dbReference type="ChEBI" id="CHEBI:15377"/>
        <dbReference type="ChEBI" id="CHEBI:78784"/>
        <dbReference type="ChEBI" id="CHEBI:78827"/>
        <dbReference type="EC" id="4.2.1.59"/>
    </reaction>
</comment>
<comment type="catalytic activity">
    <reaction evidence="1">
        <text>(3R)-hydroxydecanoyl-[ACP] = (2E)-decenoyl-[ACP] + H2O</text>
        <dbReference type="Rhea" id="RHEA:41860"/>
        <dbReference type="Rhea" id="RHEA-COMP:9638"/>
        <dbReference type="Rhea" id="RHEA-COMP:9639"/>
        <dbReference type="ChEBI" id="CHEBI:15377"/>
        <dbReference type="ChEBI" id="CHEBI:78466"/>
        <dbReference type="ChEBI" id="CHEBI:78467"/>
    </reaction>
</comment>
<comment type="catalytic activity">
    <reaction evidence="1">
        <text>(2E)-decenoyl-[ACP] = (3Z)-decenoyl-[ACP]</text>
        <dbReference type="Rhea" id="RHEA:23568"/>
        <dbReference type="Rhea" id="RHEA-COMP:9639"/>
        <dbReference type="Rhea" id="RHEA-COMP:9927"/>
        <dbReference type="ChEBI" id="CHEBI:78467"/>
        <dbReference type="ChEBI" id="CHEBI:78798"/>
        <dbReference type="EC" id="5.3.3.14"/>
    </reaction>
</comment>
<comment type="pathway">
    <text evidence="1">Lipid metabolism; fatty acid biosynthesis.</text>
</comment>
<comment type="subunit">
    <text evidence="1">Homodimer.</text>
</comment>
<comment type="subcellular location">
    <subcellularLocation>
        <location evidence="1">Cytoplasm</location>
    </subcellularLocation>
</comment>
<comment type="similarity">
    <text evidence="1">Belongs to the thioester dehydratase family. FabA subfamily.</text>
</comment>
<reference key="1">
    <citation type="journal article" date="2003" name="Nat. Biotechnol.">
        <title>The genome sequence of the entomopathogenic bacterium Photorhabdus luminescens.</title>
        <authorList>
            <person name="Duchaud E."/>
            <person name="Rusniok C."/>
            <person name="Frangeul L."/>
            <person name="Buchrieser C."/>
            <person name="Givaudan A."/>
            <person name="Taourit S."/>
            <person name="Bocs S."/>
            <person name="Boursaux-Eude C."/>
            <person name="Chandler M."/>
            <person name="Charles J.-F."/>
            <person name="Dassa E."/>
            <person name="Derose R."/>
            <person name="Derzelle S."/>
            <person name="Freyssinet G."/>
            <person name="Gaudriault S."/>
            <person name="Medigue C."/>
            <person name="Lanois A."/>
            <person name="Powell K."/>
            <person name="Siguier P."/>
            <person name="Vincent R."/>
            <person name="Wingate V."/>
            <person name="Zouine M."/>
            <person name="Glaser P."/>
            <person name="Boemare N."/>
            <person name="Danchin A."/>
            <person name="Kunst F."/>
        </authorList>
    </citation>
    <scope>NUCLEOTIDE SEQUENCE [LARGE SCALE GENOMIC DNA]</scope>
    <source>
        <strain>DSM 15139 / CIP 105565 / TT01</strain>
    </source>
</reference>
<feature type="chain" id="PRO_0000091604" description="3-hydroxydecanoyl-[acyl-carrier-protein] dehydratase">
    <location>
        <begin position="1"/>
        <end position="172"/>
    </location>
</feature>
<feature type="active site" evidence="1">
    <location>
        <position position="71"/>
    </location>
</feature>
<gene>
    <name evidence="1" type="primary">fabA</name>
    <name type="ordered locus">plu1772</name>
</gene>
<organism>
    <name type="scientific">Photorhabdus laumondii subsp. laumondii (strain DSM 15139 / CIP 105565 / TT01)</name>
    <name type="common">Photorhabdus luminescens subsp. laumondii</name>
    <dbReference type="NCBI Taxonomy" id="243265"/>
    <lineage>
        <taxon>Bacteria</taxon>
        <taxon>Pseudomonadati</taxon>
        <taxon>Pseudomonadota</taxon>
        <taxon>Gammaproteobacteria</taxon>
        <taxon>Enterobacterales</taxon>
        <taxon>Morganellaceae</taxon>
        <taxon>Photorhabdus</taxon>
    </lineage>
</organism>
<sequence>MVDKLKSYTKEDLIASGRSELFGENGPPLPSGNMLMMDRIIEMTENGGTHDKGYIEAELDITPDLWFFDCHFIDDPVMPGCLGLDAMWQLVGFFLGWLGGEGKGRALGVGEVKFTGQVLPTAKKVTYRINFKRVINRKLIMGLADGEVLVDGKIIYTATDLKVGLFKDTSAF</sequence>
<proteinExistence type="inferred from homology"/>
<name>FABA_PHOLL</name>
<accession>Q7MB46</accession>
<protein>
    <recommendedName>
        <fullName evidence="1">3-hydroxydecanoyl-[acyl-carrier-protein] dehydratase</fullName>
        <ecNumber evidence="1">4.2.1.59</ecNumber>
    </recommendedName>
    <alternativeName>
        <fullName evidence="1">3-hydroxyacyl-[acyl-carrier-protein] dehydratase FabA</fullName>
    </alternativeName>
    <alternativeName>
        <fullName evidence="1">Beta-hydroxydecanoyl thioester dehydrase</fullName>
    </alternativeName>
    <alternativeName>
        <fullName evidence="1">Trans-2-decenoyl-[acyl-carrier-protein] isomerase</fullName>
        <ecNumber evidence="1">5.3.3.14</ecNumber>
    </alternativeName>
</protein>
<dbReference type="EC" id="4.2.1.59" evidence="1"/>
<dbReference type="EC" id="5.3.3.14" evidence="1"/>
<dbReference type="EMBL" id="BX571865">
    <property type="protein sequence ID" value="CAE14065.1"/>
    <property type="molecule type" value="Genomic_DNA"/>
</dbReference>
<dbReference type="RefSeq" id="WP_011146050.1">
    <property type="nucleotide sequence ID" value="NC_005126.1"/>
</dbReference>
<dbReference type="SMR" id="Q7MB46"/>
<dbReference type="STRING" id="243265.plu1772"/>
<dbReference type="GeneID" id="48848052"/>
<dbReference type="KEGG" id="plu:plu1772"/>
<dbReference type="eggNOG" id="COG0764">
    <property type="taxonomic scope" value="Bacteria"/>
</dbReference>
<dbReference type="HOGENOM" id="CLU_097925_0_0_6"/>
<dbReference type="OrthoDB" id="9786735at2"/>
<dbReference type="UniPathway" id="UPA00094"/>
<dbReference type="Proteomes" id="UP000002514">
    <property type="component" value="Chromosome"/>
</dbReference>
<dbReference type="GO" id="GO:0005737">
    <property type="term" value="C:cytoplasm"/>
    <property type="evidence" value="ECO:0007669"/>
    <property type="project" value="UniProtKB-SubCell"/>
</dbReference>
<dbReference type="GO" id="GO:0019171">
    <property type="term" value="F:(3R)-hydroxyacyl-[acyl-carrier-protein] dehydratase activity"/>
    <property type="evidence" value="ECO:0007669"/>
    <property type="project" value="UniProtKB-UniRule"/>
</dbReference>
<dbReference type="GO" id="GO:0034017">
    <property type="term" value="F:trans-2-decenoyl-acyl-carrier-protein isomerase activity"/>
    <property type="evidence" value="ECO:0007669"/>
    <property type="project" value="UniProtKB-UniRule"/>
</dbReference>
<dbReference type="GO" id="GO:0006636">
    <property type="term" value="P:unsaturated fatty acid biosynthetic process"/>
    <property type="evidence" value="ECO:0007669"/>
    <property type="project" value="UniProtKB-UniRule"/>
</dbReference>
<dbReference type="CDD" id="cd01287">
    <property type="entry name" value="FabA"/>
    <property type="match status" value="1"/>
</dbReference>
<dbReference type="FunFam" id="3.10.129.10:FF:000003">
    <property type="entry name" value="3-hydroxydecanoyl-[acyl-carrier-protein] dehydratase"/>
    <property type="match status" value="1"/>
</dbReference>
<dbReference type="Gene3D" id="3.10.129.10">
    <property type="entry name" value="Hotdog Thioesterase"/>
    <property type="match status" value="1"/>
</dbReference>
<dbReference type="HAMAP" id="MF_00405">
    <property type="entry name" value="FabA"/>
    <property type="match status" value="1"/>
</dbReference>
<dbReference type="InterPro" id="IPR010083">
    <property type="entry name" value="FabA"/>
</dbReference>
<dbReference type="InterPro" id="IPR013114">
    <property type="entry name" value="FabA_FabZ"/>
</dbReference>
<dbReference type="InterPro" id="IPR029069">
    <property type="entry name" value="HotDog_dom_sf"/>
</dbReference>
<dbReference type="NCBIfam" id="TIGR01749">
    <property type="entry name" value="fabA"/>
    <property type="match status" value="1"/>
</dbReference>
<dbReference type="NCBIfam" id="NF003509">
    <property type="entry name" value="PRK05174.1"/>
    <property type="match status" value="1"/>
</dbReference>
<dbReference type="PANTHER" id="PTHR30272">
    <property type="entry name" value="3-HYDROXYACYL-[ACYL-CARRIER-PROTEIN] DEHYDRATASE"/>
    <property type="match status" value="1"/>
</dbReference>
<dbReference type="PANTHER" id="PTHR30272:SF8">
    <property type="entry name" value="3-HYDROXYDECANOYL-[ACYL-CARRIER-PROTEIN] DEHYDRATASE"/>
    <property type="match status" value="1"/>
</dbReference>
<dbReference type="Pfam" id="PF07977">
    <property type="entry name" value="FabA"/>
    <property type="match status" value="1"/>
</dbReference>
<dbReference type="SUPFAM" id="SSF54637">
    <property type="entry name" value="Thioesterase/thiol ester dehydrase-isomerase"/>
    <property type="match status" value="1"/>
</dbReference>
<keyword id="KW-0963">Cytoplasm</keyword>
<keyword id="KW-0275">Fatty acid biosynthesis</keyword>
<keyword id="KW-0276">Fatty acid metabolism</keyword>
<keyword id="KW-0413">Isomerase</keyword>
<keyword id="KW-0444">Lipid biosynthesis</keyword>
<keyword id="KW-0443">Lipid metabolism</keyword>
<keyword id="KW-0456">Lyase</keyword>
<keyword id="KW-1185">Reference proteome</keyword>